<evidence type="ECO:0000255" key="1">
    <source>
        <dbReference type="HAMAP-Rule" id="MF_00202"/>
    </source>
</evidence>
<comment type="function">
    <text evidence="1">Catalyzes the 1,3-allylic rearrangement of the homoallylic substrate isopentenyl (IPP) to its highly electrophilic allylic isomer, dimethylallyl diphosphate (DMAPP).</text>
</comment>
<comment type="catalytic activity">
    <reaction evidence="1">
        <text>isopentenyl diphosphate = dimethylallyl diphosphate</text>
        <dbReference type="Rhea" id="RHEA:23284"/>
        <dbReference type="ChEBI" id="CHEBI:57623"/>
        <dbReference type="ChEBI" id="CHEBI:128769"/>
        <dbReference type="EC" id="5.3.3.2"/>
    </reaction>
</comment>
<comment type="cofactor">
    <cofactor evidence="1">
        <name>Mg(2+)</name>
        <dbReference type="ChEBI" id="CHEBI:18420"/>
    </cofactor>
    <text evidence="1">Binds 1 Mg(2+) ion per subunit. The magnesium ion binds only when substrate is bound.</text>
</comment>
<comment type="cofactor">
    <cofactor evidence="1">
        <name>Mn(2+)</name>
        <dbReference type="ChEBI" id="CHEBI:29035"/>
    </cofactor>
    <text evidence="1">Binds 1 Mn(2+) ion per subunit.</text>
</comment>
<comment type="pathway">
    <text evidence="1">Isoprenoid biosynthesis; dimethylallyl diphosphate biosynthesis; dimethylallyl diphosphate from isopentenyl diphosphate: step 1/1.</text>
</comment>
<comment type="subunit">
    <text evidence="1">Homodimer.</text>
</comment>
<comment type="subcellular location">
    <subcellularLocation>
        <location evidence="1">Cytoplasm</location>
    </subcellularLocation>
</comment>
<comment type="similarity">
    <text evidence="1">Belongs to the IPP isomerase type 1 family.</text>
</comment>
<name>IDI_ECO24</name>
<proteinExistence type="inferred from homology"/>
<sequence length="182" mass="20373">MQTEHVILLNAQGVPTGTLEKYAAHTADTRLHLAFSSWLFNAKGQLLVTRRALSKKAWPGVWTNSVCGHPQLGESNEDAVIRRCRYELGVEITPPESIYPDFRYRATDPNGIVENEVCPVFAARTTSALQINDDEVMDYQWCDLADVLHGIDATPWAFSPWMVMQAANSEARKLLSAFAQHN</sequence>
<protein>
    <recommendedName>
        <fullName evidence="1">Isopentenyl-diphosphate Delta-isomerase</fullName>
        <shortName evidence="1">IPP isomerase</shortName>
        <ecNumber evidence="1">5.3.3.2</ecNumber>
    </recommendedName>
    <alternativeName>
        <fullName evidence="1">IPP:DMAPP isomerase</fullName>
    </alternativeName>
    <alternativeName>
        <fullName evidence="1">Isopentenyl pyrophosphate isomerase</fullName>
    </alternativeName>
</protein>
<accession>A7ZQZ8</accession>
<dbReference type="EC" id="5.3.3.2" evidence="1"/>
<dbReference type="EMBL" id="CP000800">
    <property type="protein sequence ID" value="ABV19519.1"/>
    <property type="molecule type" value="Genomic_DNA"/>
</dbReference>
<dbReference type="RefSeq" id="WP_001192814.1">
    <property type="nucleotide sequence ID" value="NC_009801.1"/>
</dbReference>
<dbReference type="SMR" id="A7ZQZ8"/>
<dbReference type="GeneID" id="93779113"/>
<dbReference type="KEGG" id="ecw:EcE24377A_3215"/>
<dbReference type="HOGENOM" id="CLU_060552_2_0_6"/>
<dbReference type="UniPathway" id="UPA00059">
    <property type="reaction ID" value="UER00104"/>
</dbReference>
<dbReference type="Proteomes" id="UP000001122">
    <property type="component" value="Chromosome"/>
</dbReference>
<dbReference type="GO" id="GO:0005737">
    <property type="term" value="C:cytoplasm"/>
    <property type="evidence" value="ECO:0007669"/>
    <property type="project" value="UniProtKB-SubCell"/>
</dbReference>
<dbReference type="GO" id="GO:0004452">
    <property type="term" value="F:isopentenyl-diphosphate delta-isomerase activity"/>
    <property type="evidence" value="ECO:0007669"/>
    <property type="project" value="UniProtKB-UniRule"/>
</dbReference>
<dbReference type="GO" id="GO:0046872">
    <property type="term" value="F:metal ion binding"/>
    <property type="evidence" value="ECO:0007669"/>
    <property type="project" value="UniProtKB-KW"/>
</dbReference>
<dbReference type="GO" id="GO:0050992">
    <property type="term" value="P:dimethylallyl diphosphate biosynthetic process"/>
    <property type="evidence" value="ECO:0007669"/>
    <property type="project" value="UniProtKB-UniRule"/>
</dbReference>
<dbReference type="GO" id="GO:0008299">
    <property type="term" value="P:isoprenoid biosynthetic process"/>
    <property type="evidence" value="ECO:0007669"/>
    <property type="project" value="UniProtKB-KW"/>
</dbReference>
<dbReference type="CDD" id="cd02885">
    <property type="entry name" value="NUDIX_IPP_Isomerase"/>
    <property type="match status" value="1"/>
</dbReference>
<dbReference type="FunFam" id="3.90.79.10:FF:000009">
    <property type="entry name" value="Isopentenyl-diphosphate Delta-isomerase"/>
    <property type="match status" value="1"/>
</dbReference>
<dbReference type="Gene3D" id="3.90.79.10">
    <property type="entry name" value="Nucleoside Triphosphate Pyrophosphohydrolase"/>
    <property type="match status" value="1"/>
</dbReference>
<dbReference type="HAMAP" id="MF_00202">
    <property type="entry name" value="Idi"/>
    <property type="match status" value="1"/>
</dbReference>
<dbReference type="InterPro" id="IPR056375">
    <property type="entry name" value="Idi_bact"/>
</dbReference>
<dbReference type="InterPro" id="IPR011876">
    <property type="entry name" value="IsopentenylPP_isomerase_typ1"/>
</dbReference>
<dbReference type="InterPro" id="IPR015797">
    <property type="entry name" value="NUDIX_hydrolase-like_dom_sf"/>
</dbReference>
<dbReference type="InterPro" id="IPR000086">
    <property type="entry name" value="NUDIX_hydrolase_dom"/>
</dbReference>
<dbReference type="NCBIfam" id="TIGR02150">
    <property type="entry name" value="IPP_isom_1"/>
    <property type="match status" value="1"/>
</dbReference>
<dbReference type="NCBIfam" id="NF002995">
    <property type="entry name" value="PRK03759.1"/>
    <property type="match status" value="1"/>
</dbReference>
<dbReference type="PANTHER" id="PTHR10885">
    <property type="entry name" value="ISOPENTENYL-DIPHOSPHATE DELTA-ISOMERASE"/>
    <property type="match status" value="1"/>
</dbReference>
<dbReference type="PANTHER" id="PTHR10885:SF0">
    <property type="entry name" value="ISOPENTENYL-DIPHOSPHATE DELTA-ISOMERASE"/>
    <property type="match status" value="1"/>
</dbReference>
<dbReference type="Pfam" id="PF00293">
    <property type="entry name" value="NUDIX"/>
    <property type="match status" value="1"/>
</dbReference>
<dbReference type="PIRSF" id="PIRSF018427">
    <property type="entry name" value="Isopntndiph_ism"/>
    <property type="match status" value="1"/>
</dbReference>
<dbReference type="SUPFAM" id="SSF55811">
    <property type="entry name" value="Nudix"/>
    <property type="match status" value="1"/>
</dbReference>
<dbReference type="PROSITE" id="PS51462">
    <property type="entry name" value="NUDIX"/>
    <property type="match status" value="1"/>
</dbReference>
<keyword id="KW-0963">Cytoplasm</keyword>
<keyword id="KW-0413">Isomerase</keyword>
<keyword id="KW-0414">Isoprene biosynthesis</keyword>
<keyword id="KW-0460">Magnesium</keyword>
<keyword id="KW-0464">Manganese</keyword>
<keyword id="KW-0479">Metal-binding</keyword>
<keyword id="KW-1185">Reference proteome</keyword>
<gene>
    <name evidence="1" type="primary">idi</name>
    <name type="ordered locus">EcE24377A_3215</name>
</gene>
<organism>
    <name type="scientific">Escherichia coli O139:H28 (strain E24377A / ETEC)</name>
    <dbReference type="NCBI Taxonomy" id="331111"/>
    <lineage>
        <taxon>Bacteria</taxon>
        <taxon>Pseudomonadati</taxon>
        <taxon>Pseudomonadota</taxon>
        <taxon>Gammaproteobacteria</taxon>
        <taxon>Enterobacterales</taxon>
        <taxon>Enterobacteriaceae</taxon>
        <taxon>Escherichia</taxon>
    </lineage>
</organism>
<feature type="chain" id="PRO_1000058570" description="Isopentenyl-diphosphate Delta-isomerase">
    <location>
        <begin position="1"/>
        <end position="182"/>
    </location>
</feature>
<feature type="domain" description="Nudix hydrolase">
    <location>
        <begin position="30"/>
        <end position="164"/>
    </location>
</feature>
<feature type="active site" evidence="1">
    <location>
        <position position="67"/>
    </location>
</feature>
<feature type="active site" evidence="1">
    <location>
        <position position="116"/>
    </location>
</feature>
<feature type="binding site" evidence="1">
    <location>
        <position position="25"/>
    </location>
    <ligand>
        <name>Mn(2+)</name>
        <dbReference type="ChEBI" id="CHEBI:29035"/>
    </ligand>
</feature>
<feature type="binding site" evidence="1">
    <location>
        <position position="32"/>
    </location>
    <ligand>
        <name>Mn(2+)</name>
        <dbReference type="ChEBI" id="CHEBI:29035"/>
    </ligand>
</feature>
<feature type="binding site" evidence="1">
    <location>
        <position position="69"/>
    </location>
    <ligand>
        <name>Mn(2+)</name>
        <dbReference type="ChEBI" id="CHEBI:29035"/>
    </ligand>
</feature>
<feature type="binding site" evidence="1">
    <location>
        <position position="87"/>
    </location>
    <ligand>
        <name>Mg(2+)</name>
        <dbReference type="ChEBI" id="CHEBI:18420"/>
    </ligand>
</feature>
<feature type="binding site" evidence="1">
    <location>
        <position position="114"/>
    </location>
    <ligand>
        <name>Mn(2+)</name>
        <dbReference type="ChEBI" id="CHEBI:29035"/>
    </ligand>
</feature>
<feature type="binding site" evidence="1">
    <location>
        <position position="116"/>
    </location>
    <ligand>
        <name>Mn(2+)</name>
        <dbReference type="ChEBI" id="CHEBI:29035"/>
    </ligand>
</feature>
<reference key="1">
    <citation type="journal article" date="2008" name="J. Bacteriol.">
        <title>The pangenome structure of Escherichia coli: comparative genomic analysis of E. coli commensal and pathogenic isolates.</title>
        <authorList>
            <person name="Rasko D.A."/>
            <person name="Rosovitz M.J."/>
            <person name="Myers G.S.A."/>
            <person name="Mongodin E.F."/>
            <person name="Fricke W.F."/>
            <person name="Gajer P."/>
            <person name="Crabtree J."/>
            <person name="Sebaihia M."/>
            <person name="Thomson N.R."/>
            <person name="Chaudhuri R."/>
            <person name="Henderson I.R."/>
            <person name="Sperandio V."/>
            <person name="Ravel J."/>
        </authorList>
    </citation>
    <scope>NUCLEOTIDE SEQUENCE [LARGE SCALE GENOMIC DNA]</scope>
    <source>
        <strain>E24377A / ETEC</strain>
    </source>
</reference>